<keyword id="KW-0002">3D-structure</keyword>
<keyword id="KW-1003">Cell membrane</keyword>
<keyword id="KW-0217">Developmental protein</keyword>
<keyword id="KW-1015">Disulfide bond</keyword>
<keyword id="KW-0297">G-protein coupled receptor</keyword>
<keyword id="KW-0325">Glycoprotein</keyword>
<keyword id="KW-0472">Membrane</keyword>
<keyword id="KW-1267">Proteomics identification</keyword>
<keyword id="KW-0675">Receptor</keyword>
<keyword id="KW-1185">Reference proteome</keyword>
<keyword id="KW-0732">Signal</keyword>
<keyword id="KW-0807">Transducer</keyword>
<keyword id="KW-0812">Transmembrane</keyword>
<keyword id="KW-1133">Transmembrane helix</keyword>
<keyword id="KW-0832">Ubl conjugation</keyword>
<keyword id="KW-0879">Wnt signaling pathway</keyword>
<accession>Q9UP38</accession>
<accession>A4D1E8</accession>
<accession>O94815</accession>
<accession>Q549T8</accession>
<protein>
    <recommendedName>
        <fullName>Frizzled-1</fullName>
        <shortName>Fz-1</shortName>
        <shortName>hFz1</shortName>
    </recommendedName>
    <alternativeName>
        <fullName>FzE1</fullName>
    </alternativeName>
</protein>
<proteinExistence type="evidence at protein level"/>
<reference key="1">
    <citation type="journal article" date="1999" name="Oncogene">
        <title>Human frizzled 1 interacts with transforming Wnts to transduce a TCF dependent transcriptional response.</title>
        <authorList>
            <person name="Gazit A."/>
            <person name="Yaniv A."/>
            <person name="Bafico A."/>
            <person name="Pramila T."/>
            <person name="Igarashi M."/>
            <person name="Kitajewski J."/>
            <person name="Aaronson S.A."/>
        </authorList>
    </citation>
    <scope>NUCLEOTIDE SEQUENCE [MRNA]</scope>
    <scope>FUNCTION</scope>
    <scope>SUBCELLULAR LOCATION</scope>
    <source>
        <tissue>Prostatic carcinoma</tissue>
    </source>
</reference>
<reference key="2">
    <citation type="journal article" date="1998" name="Biochem. Biophys. Res. Commun.">
        <title>Molecular cloning, differential expression, and chromosomal localization of human frizzled-1, frizzled-2, and frizzled-7.</title>
        <authorList>
            <person name="Sagara N."/>
            <person name="Toda G."/>
            <person name="Hirai M."/>
            <person name="Terada M."/>
            <person name="Katoh M."/>
        </authorList>
    </citation>
    <scope>NUCLEOTIDE SEQUENCE [MRNA]</scope>
    <scope>TISSUE SPECIFICITY</scope>
    <source>
        <tissue>Fetal lung</tissue>
    </source>
</reference>
<reference key="3">
    <citation type="journal article" date="2003" name="Science">
        <title>Human chromosome 7: DNA sequence and biology.</title>
        <authorList>
            <person name="Scherer S.W."/>
            <person name="Cheung J."/>
            <person name="MacDonald J.R."/>
            <person name="Osborne L.R."/>
            <person name="Nakabayashi K."/>
            <person name="Herbrick J.-A."/>
            <person name="Carson A.R."/>
            <person name="Parker-Katiraee L."/>
            <person name="Skaug J."/>
            <person name="Khaja R."/>
            <person name="Zhang J."/>
            <person name="Hudek A.K."/>
            <person name="Li M."/>
            <person name="Haddad M."/>
            <person name="Duggan G.E."/>
            <person name="Fernandez B.A."/>
            <person name="Kanematsu E."/>
            <person name="Gentles S."/>
            <person name="Christopoulos C.C."/>
            <person name="Choufani S."/>
            <person name="Kwasnicka D."/>
            <person name="Zheng X.H."/>
            <person name="Lai Z."/>
            <person name="Nusskern D.R."/>
            <person name="Zhang Q."/>
            <person name="Gu Z."/>
            <person name="Lu F."/>
            <person name="Zeesman S."/>
            <person name="Nowaczyk M.J."/>
            <person name="Teshima I."/>
            <person name="Chitayat D."/>
            <person name="Shuman C."/>
            <person name="Weksberg R."/>
            <person name="Zackai E.H."/>
            <person name="Grebe T.A."/>
            <person name="Cox S.R."/>
            <person name="Kirkpatrick S.J."/>
            <person name="Rahman N."/>
            <person name="Friedman J.M."/>
            <person name="Heng H.H.Q."/>
            <person name="Pelicci P.G."/>
            <person name="Lo-Coco F."/>
            <person name="Belloni E."/>
            <person name="Shaffer L.G."/>
            <person name="Pober B."/>
            <person name="Morton C.C."/>
            <person name="Gusella J.F."/>
            <person name="Bruns G.A.P."/>
            <person name="Korf B.R."/>
            <person name="Quade B.J."/>
            <person name="Ligon A.H."/>
            <person name="Ferguson H."/>
            <person name="Higgins A.W."/>
            <person name="Leach N.T."/>
            <person name="Herrick S.R."/>
            <person name="Lemyre E."/>
            <person name="Farra C.G."/>
            <person name="Kim H.-G."/>
            <person name="Summers A.M."/>
            <person name="Gripp K.W."/>
            <person name="Roberts W."/>
            <person name="Szatmari P."/>
            <person name="Winsor E.J.T."/>
            <person name="Grzeschik K.-H."/>
            <person name="Teebi A."/>
            <person name="Minassian B.A."/>
            <person name="Kere J."/>
            <person name="Armengol L."/>
            <person name="Pujana M.A."/>
            <person name="Estivill X."/>
            <person name="Wilson M.D."/>
            <person name="Koop B.F."/>
            <person name="Tosi S."/>
            <person name="Moore G.E."/>
            <person name="Boright A.P."/>
            <person name="Zlotorynski E."/>
            <person name="Kerem B."/>
            <person name="Kroisel P.M."/>
            <person name="Petek E."/>
            <person name="Oscier D.G."/>
            <person name="Mould S.J."/>
            <person name="Doehner H."/>
            <person name="Doehner K."/>
            <person name="Rommens J.M."/>
            <person name="Vincent J.B."/>
            <person name="Venter J.C."/>
            <person name="Li P.W."/>
            <person name="Mural R.J."/>
            <person name="Adams M.D."/>
            <person name="Tsui L.-C."/>
        </authorList>
    </citation>
    <scope>NUCLEOTIDE SEQUENCE [LARGE SCALE GENOMIC DNA]</scope>
</reference>
<reference key="4">
    <citation type="submission" date="2005-09" db="EMBL/GenBank/DDBJ databases">
        <authorList>
            <person name="Mural R.J."/>
            <person name="Istrail S."/>
            <person name="Sutton G.G."/>
            <person name="Florea L."/>
            <person name="Halpern A.L."/>
            <person name="Mobarry C.M."/>
            <person name="Lippert R."/>
            <person name="Walenz B."/>
            <person name="Shatkay H."/>
            <person name="Dew I."/>
            <person name="Miller J.R."/>
            <person name="Flanigan M.J."/>
            <person name="Edwards N.J."/>
            <person name="Bolanos R."/>
            <person name="Fasulo D."/>
            <person name="Halldorsson B.V."/>
            <person name="Hannenhalli S."/>
            <person name="Turner R."/>
            <person name="Yooseph S."/>
            <person name="Lu F."/>
            <person name="Nusskern D.R."/>
            <person name="Shue B.C."/>
            <person name="Zheng X.H."/>
            <person name="Zhong F."/>
            <person name="Delcher A.L."/>
            <person name="Huson D.H."/>
            <person name="Kravitz S.A."/>
            <person name="Mouchard L."/>
            <person name="Reinert K."/>
            <person name="Remington K.A."/>
            <person name="Clark A.G."/>
            <person name="Waterman M.S."/>
            <person name="Eichler E.E."/>
            <person name="Adams M.D."/>
            <person name="Hunkapiller M.W."/>
            <person name="Myers E.W."/>
            <person name="Venter J.C."/>
        </authorList>
    </citation>
    <scope>NUCLEOTIDE SEQUENCE [LARGE SCALE GENOMIC DNA]</scope>
</reference>
<reference key="5">
    <citation type="journal article" date="2003" name="Nature">
        <title>The DNA sequence of human chromosome 7.</title>
        <authorList>
            <person name="Hillier L.W."/>
            <person name="Fulton R.S."/>
            <person name="Fulton L.A."/>
            <person name="Graves T.A."/>
            <person name="Pepin K.H."/>
            <person name="Wagner-McPherson C."/>
            <person name="Layman D."/>
            <person name="Maas J."/>
            <person name="Jaeger S."/>
            <person name="Walker R."/>
            <person name="Wylie K."/>
            <person name="Sekhon M."/>
            <person name="Becker M.C."/>
            <person name="O'Laughlin M.D."/>
            <person name="Schaller M.E."/>
            <person name="Fewell G.A."/>
            <person name="Delehaunty K.D."/>
            <person name="Miner T.L."/>
            <person name="Nash W.E."/>
            <person name="Cordes M."/>
            <person name="Du H."/>
            <person name="Sun H."/>
            <person name="Edwards J."/>
            <person name="Bradshaw-Cordum H."/>
            <person name="Ali J."/>
            <person name="Andrews S."/>
            <person name="Isak A."/>
            <person name="Vanbrunt A."/>
            <person name="Nguyen C."/>
            <person name="Du F."/>
            <person name="Lamar B."/>
            <person name="Courtney L."/>
            <person name="Kalicki J."/>
            <person name="Ozersky P."/>
            <person name="Bielicki L."/>
            <person name="Scott K."/>
            <person name="Holmes A."/>
            <person name="Harkins R."/>
            <person name="Harris A."/>
            <person name="Strong C.M."/>
            <person name="Hou S."/>
            <person name="Tomlinson C."/>
            <person name="Dauphin-Kohlberg S."/>
            <person name="Kozlowicz-Reilly A."/>
            <person name="Leonard S."/>
            <person name="Rohlfing T."/>
            <person name="Rock S.M."/>
            <person name="Tin-Wollam A.-M."/>
            <person name="Abbott A."/>
            <person name="Minx P."/>
            <person name="Maupin R."/>
            <person name="Strowmatt C."/>
            <person name="Latreille P."/>
            <person name="Miller N."/>
            <person name="Johnson D."/>
            <person name="Murray J."/>
            <person name="Woessner J.P."/>
            <person name="Wendl M.C."/>
            <person name="Yang S.-P."/>
            <person name="Schultz B.R."/>
            <person name="Wallis J.W."/>
            <person name="Spieth J."/>
            <person name="Bieri T.A."/>
            <person name="Nelson J.O."/>
            <person name="Berkowicz N."/>
            <person name="Wohldmann P.E."/>
            <person name="Cook L.L."/>
            <person name="Hickenbotham M.T."/>
            <person name="Eldred J."/>
            <person name="Williams D."/>
            <person name="Bedell J.A."/>
            <person name="Mardis E.R."/>
            <person name="Clifton S.W."/>
            <person name="Chissoe S.L."/>
            <person name="Marra M.A."/>
            <person name="Raymond C."/>
            <person name="Haugen E."/>
            <person name="Gillett W."/>
            <person name="Zhou Y."/>
            <person name="James R."/>
            <person name="Phelps K."/>
            <person name="Iadanoto S."/>
            <person name="Bubb K."/>
            <person name="Simms E."/>
            <person name="Levy R."/>
            <person name="Clendenning J."/>
            <person name="Kaul R."/>
            <person name="Kent W.J."/>
            <person name="Furey T.S."/>
            <person name="Baertsch R.A."/>
            <person name="Brent M.R."/>
            <person name="Keibler E."/>
            <person name="Flicek P."/>
            <person name="Bork P."/>
            <person name="Suyama M."/>
            <person name="Bailey J.A."/>
            <person name="Portnoy M.E."/>
            <person name="Torrents D."/>
            <person name="Chinwalla A.T."/>
            <person name="Gish W.R."/>
            <person name="Eddy S.R."/>
            <person name="McPherson J.D."/>
            <person name="Olson M.V."/>
            <person name="Eichler E.E."/>
            <person name="Green E.D."/>
            <person name="Waterston R.H."/>
            <person name="Wilson R.K."/>
        </authorList>
    </citation>
    <scope>NUCLEOTIDE SEQUENCE [LARGE SCALE GENOMIC DNA]</scope>
</reference>
<reference key="6">
    <citation type="journal article" date="2004" name="Genome Res.">
        <title>The status, quality, and expansion of the NIH full-length cDNA project: the Mammalian Gene Collection (MGC).</title>
        <authorList>
            <consortium name="The MGC Project Team"/>
        </authorList>
    </citation>
    <scope>NUCLEOTIDE SEQUENCE [LARGE SCALE MRNA]</scope>
    <source>
        <tissue>Eye</tissue>
    </source>
</reference>
<reference key="7">
    <citation type="journal article" date="1998" name="Proc. Natl. Acad. Sci. U.S.A.">
        <title>A novel frizzled gene identified in human esophageal carcinoma mediates APC/beta-catenin signals.</title>
        <authorList>
            <person name="Tanaka S."/>
            <person name="Akiyoshi T."/>
            <person name="Mori M."/>
            <person name="Wands J.R."/>
            <person name="Sugimachi K."/>
        </authorList>
    </citation>
    <scope>NUCLEOTIDE SEQUENCE [MRNA] OF 357-418</scope>
    <source>
        <tissue>Esophageal carcinoma</tissue>
    </source>
</reference>
<reference key="8">
    <citation type="journal article" date="2009" name="Mol. Cell. Biol.">
        <title>Myocilin is a modulator of Wnt signaling.</title>
        <authorList>
            <person name="Kwon H.S."/>
            <person name="Lee H.S."/>
            <person name="Ji Y."/>
            <person name="Rubin J.S."/>
            <person name="Tomarev S.I."/>
        </authorList>
    </citation>
    <scope>INTERACTION WITH MYOC</scope>
</reference>
<reference key="9">
    <citation type="journal article" date="2016" name="Nature">
        <title>Frizzled proteins are colonic epithelial receptors for C. difficile toxin B.</title>
        <authorList>
            <person name="Tao L."/>
            <person name="Zhang J."/>
            <person name="Meraner P."/>
            <person name="Tovaglieri A."/>
            <person name="Wu X."/>
            <person name="Gerhard R."/>
            <person name="Zhang X."/>
            <person name="Stallcup W.B."/>
            <person name="Miao J."/>
            <person name="He X."/>
            <person name="Hurdle J.G."/>
            <person name="Breault D.T."/>
            <person name="Brass A.L."/>
            <person name="Dong M."/>
        </authorList>
    </citation>
    <scope>FUNCTION (MICROBIAL INFECTION)</scope>
    <scope>INTERACTION WITH C.DIFFICILE TCDB (MICROBIAL INFECTION)</scope>
</reference>
<organism>
    <name type="scientific">Homo sapiens</name>
    <name type="common">Human</name>
    <dbReference type="NCBI Taxonomy" id="9606"/>
    <lineage>
        <taxon>Eukaryota</taxon>
        <taxon>Metazoa</taxon>
        <taxon>Chordata</taxon>
        <taxon>Craniata</taxon>
        <taxon>Vertebrata</taxon>
        <taxon>Euteleostomi</taxon>
        <taxon>Mammalia</taxon>
        <taxon>Eutheria</taxon>
        <taxon>Euarchontoglires</taxon>
        <taxon>Primates</taxon>
        <taxon>Haplorrhini</taxon>
        <taxon>Catarrhini</taxon>
        <taxon>Hominidae</taxon>
        <taxon>Homo</taxon>
    </lineage>
</organism>
<dbReference type="EMBL" id="AF072872">
    <property type="protein sequence ID" value="AAD41636.1"/>
    <property type="molecule type" value="mRNA"/>
</dbReference>
<dbReference type="EMBL" id="AB017363">
    <property type="protein sequence ID" value="BAA34666.1"/>
    <property type="molecule type" value="mRNA"/>
</dbReference>
<dbReference type="EMBL" id="AC084381">
    <property type="protein sequence ID" value="AAS02008.1"/>
    <property type="molecule type" value="Genomic_DNA"/>
</dbReference>
<dbReference type="EMBL" id="CH236949">
    <property type="protein sequence ID" value="EAL24161.1"/>
    <property type="molecule type" value="Genomic_DNA"/>
</dbReference>
<dbReference type="EMBL" id="CH471091">
    <property type="protein sequence ID" value="EAW76871.1"/>
    <property type="molecule type" value="Genomic_DNA"/>
</dbReference>
<dbReference type="EMBL" id="BC051271">
    <property type="protein sequence ID" value="AAH51271.1"/>
    <property type="molecule type" value="mRNA"/>
</dbReference>
<dbReference type="CCDS" id="CCDS5620.1"/>
<dbReference type="PIR" id="JE0337">
    <property type="entry name" value="JE0337"/>
</dbReference>
<dbReference type="RefSeq" id="NP_003496.1">
    <property type="nucleotide sequence ID" value="NM_003505.2"/>
</dbReference>
<dbReference type="PDB" id="8J9N">
    <property type="method" value="EM"/>
    <property type="resolution" value="3.50 A"/>
    <property type="chains" value="B=69-647"/>
</dbReference>
<dbReference type="PDB" id="8J9O">
    <property type="method" value="EM"/>
    <property type="resolution" value="3.40 A"/>
    <property type="chains" value="A=69-514, A=528-637"/>
</dbReference>
<dbReference type="PDBsum" id="8J9N"/>
<dbReference type="PDBsum" id="8J9O"/>
<dbReference type="EMDB" id="EMD-36111"/>
<dbReference type="EMDB" id="EMD-36112"/>
<dbReference type="SMR" id="Q9UP38"/>
<dbReference type="BioGRID" id="113917">
    <property type="interactions" value="15"/>
</dbReference>
<dbReference type="FunCoup" id="Q9UP38">
    <property type="interactions" value="745"/>
</dbReference>
<dbReference type="IntAct" id="Q9UP38">
    <property type="interactions" value="10"/>
</dbReference>
<dbReference type="STRING" id="9606.ENSP00000287934"/>
<dbReference type="BindingDB" id="Q9UP38"/>
<dbReference type="ChEMBL" id="CHEMBL2346493"/>
<dbReference type="GuidetoPHARMACOLOGY" id="229"/>
<dbReference type="TCDB" id="9.A.14.16.1">
    <property type="family name" value="the g-protein-coupled receptor (gpcr) family"/>
</dbReference>
<dbReference type="GlyCosmos" id="Q9UP38">
    <property type="glycosylation" value="4 sites, 2 glycans"/>
</dbReference>
<dbReference type="GlyGen" id="Q9UP38">
    <property type="glycosylation" value="4 sites, 1 N-linked glycan (1 site), 2 O-linked glycans (2 sites)"/>
</dbReference>
<dbReference type="iPTMnet" id="Q9UP38"/>
<dbReference type="PhosphoSitePlus" id="Q9UP38"/>
<dbReference type="BioMuta" id="FZD1"/>
<dbReference type="DMDM" id="92058705"/>
<dbReference type="jPOST" id="Q9UP38"/>
<dbReference type="MassIVE" id="Q9UP38"/>
<dbReference type="PaxDb" id="9606-ENSP00000287934"/>
<dbReference type="PeptideAtlas" id="Q9UP38"/>
<dbReference type="ProteomicsDB" id="85351"/>
<dbReference type="ABCD" id="Q9UP38">
    <property type="antibodies" value="57 sequenced antibodies"/>
</dbReference>
<dbReference type="Antibodypedia" id="4574">
    <property type="antibodies" value="458 antibodies from 36 providers"/>
</dbReference>
<dbReference type="DNASU" id="8321"/>
<dbReference type="Ensembl" id="ENST00000287934.4">
    <property type="protein sequence ID" value="ENSP00000287934.2"/>
    <property type="gene ID" value="ENSG00000157240.4"/>
</dbReference>
<dbReference type="GeneID" id="8321"/>
<dbReference type="KEGG" id="hsa:8321"/>
<dbReference type="MANE-Select" id="ENST00000287934.4">
    <property type="protein sequence ID" value="ENSP00000287934.2"/>
    <property type="RefSeq nucleotide sequence ID" value="NM_003505.2"/>
    <property type="RefSeq protein sequence ID" value="NP_003496.1"/>
</dbReference>
<dbReference type="UCSC" id="uc003ula.4">
    <property type="organism name" value="human"/>
</dbReference>
<dbReference type="AGR" id="HGNC:4038"/>
<dbReference type="CTD" id="8321"/>
<dbReference type="DisGeNET" id="8321"/>
<dbReference type="GeneCards" id="FZD1"/>
<dbReference type="HGNC" id="HGNC:4038">
    <property type="gene designation" value="FZD1"/>
</dbReference>
<dbReference type="HPA" id="ENSG00000157240">
    <property type="expression patterns" value="Low tissue specificity"/>
</dbReference>
<dbReference type="MIM" id="603408">
    <property type="type" value="gene"/>
</dbReference>
<dbReference type="neXtProt" id="NX_Q9UP38"/>
<dbReference type="OpenTargets" id="ENSG00000157240"/>
<dbReference type="PharmGKB" id="PA28455"/>
<dbReference type="VEuPathDB" id="HostDB:ENSG00000157240"/>
<dbReference type="eggNOG" id="KOG3577">
    <property type="taxonomic scope" value="Eukaryota"/>
</dbReference>
<dbReference type="GeneTree" id="ENSGT00940000162584"/>
<dbReference type="HOGENOM" id="CLU_007873_2_1_1"/>
<dbReference type="InParanoid" id="Q9UP38"/>
<dbReference type="OMA" id="VPDHGYC"/>
<dbReference type="OrthoDB" id="10053709at2759"/>
<dbReference type="PAN-GO" id="Q9UP38">
    <property type="GO annotations" value="6 GO annotations based on evolutionary models"/>
</dbReference>
<dbReference type="PhylomeDB" id="Q9UP38"/>
<dbReference type="TreeFam" id="TF317907"/>
<dbReference type="PathwayCommons" id="Q9UP38"/>
<dbReference type="Reactome" id="R-HSA-201681">
    <property type="pathway name" value="TCF dependent signaling in response to WNT"/>
</dbReference>
<dbReference type="Reactome" id="R-HSA-373080">
    <property type="pathway name" value="Class B/2 (Secretin family receptors)"/>
</dbReference>
<dbReference type="Reactome" id="R-HSA-4086400">
    <property type="pathway name" value="PCP/CE pathway"/>
</dbReference>
<dbReference type="Reactome" id="R-HSA-4608870">
    <property type="pathway name" value="Asymmetric localization of PCP proteins"/>
</dbReference>
<dbReference type="Reactome" id="R-HSA-4641262">
    <property type="pathway name" value="Disassembly of the destruction complex and recruitment of AXIN to the membrane"/>
</dbReference>
<dbReference type="SignaLink" id="Q9UP38"/>
<dbReference type="SIGNOR" id="Q9UP38"/>
<dbReference type="BioGRID-ORCS" id="8321">
    <property type="hits" value="11 hits in 1154 CRISPR screens"/>
</dbReference>
<dbReference type="ChiTaRS" id="FZD1">
    <property type="organism name" value="human"/>
</dbReference>
<dbReference type="GeneWiki" id="FZD1"/>
<dbReference type="GenomeRNAi" id="8321"/>
<dbReference type="Pharos" id="Q9UP38">
    <property type="development level" value="Tchem"/>
</dbReference>
<dbReference type="PRO" id="PR:Q9UP38"/>
<dbReference type="Proteomes" id="UP000005640">
    <property type="component" value="Chromosome 7"/>
</dbReference>
<dbReference type="RNAct" id="Q9UP38">
    <property type="molecule type" value="protein"/>
</dbReference>
<dbReference type="Bgee" id="ENSG00000157240">
    <property type="expression patterns" value="Expressed in mammary duct and 186 other cell types or tissues"/>
</dbReference>
<dbReference type="GO" id="GO:0009986">
    <property type="term" value="C:cell surface"/>
    <property type="evidence" value="ECO:0000314"/>
    <property type="project" value="BHF-UCL"/>
</dbReference>
<dbReference type="GO" id="GO:0005925">
    <property type="term" value="C:focal adhesion"/>
    <property type="evidence" value="ECO:0007005"/>
    <property type="project" value="UniProtKB"/>
</dbReference>
<dbReference type="GO" id="GO:0005886">
    <property type="term" value="C:plasma membrane"/>
    <property type="evidence" value="ECO:0000318"/>
    <property type="project" value="GO_Central"/>
</dbReference>
<dbReference type="GO" id="GO:1990909">
    <property type="term" value="C:Wnt signalosome"/>
    <property type="evidence" value="ECO:0000305"/>
    <property type="project" value="ParkinsonsUK-UCL"/>
</dbReference>
<dbReference type="GO" id="GO:0005109">
    <property type="term" value="F:frizzled binding"/>
    <property type="evidence" value="ECO:0000353"/>
    <property type="project" value="UniProtKB"/>
</dbReference>
<dbReference type="GO" id="GO:0004930">
    <property type="term" value="F:G protein-coupled receptor activity"/>
    <property type="evidence" value="ECO:0007669"/>
    <property type="project" value="UniProtKB-KW"/>
</dbReference>
<dbReference type="GO" id="GO:0030165">
    <property type="term" value="F:PDZ domain binding"/>
    <property type="evidence" value="ECO:0000353"/>
    <property type="project" value="UniProtKB"/>
</dbReference>
<dbReference type="GO" id="GO:0005102">
    <property type="term" value="F:signaling receptor binding"/>
    <property type="evidence" value="ECO:0000353"/>
    <property type="project" value="BHF-UCL"/>
</dbReference>
<dbReference type="GO" id="GO:0042813">
    <property type="term" value="F:Wnt receptor activity"/>
    <property type="evidence" value="ECO:0000314"/>
    <property type="project" value="ParkinsonsUK-UCL"/>
</dbReference>
<dbReference type="GO" id="GO:0017147">
    <property type="term" value="F:Wnt-protein binding"/>
    <property type="evidence" value="ECO:0000353"/>
    <property type="project" value="UniProtKB"/>
</dbReference>
<dbReference type="GO" id="GO:0036520">
    <property type="term" value="P:astrocyte-dopaminergic neuron signaling"/>
    <property type="evidence" value="ECO:0007669"/>
    <property type="project" value="Ensembl"/>
</dbReference>
<dbReference type="GO" id="GO:0035425">
    <property type="term" value="P:autocrine signaling"/>
    <property type="evidence" value="ECO:0000314"/>
    <property type="project" value="BHF-UCL"/>
</dbReference>
<dbReference type="GO" id="GO:0060070">
    <property type="term" value="P:canonical Wnt signaling pathway"/>
    <property type="evidence" value="ECO:0000314"/>
    <property type="project" value="UniProtKB"/>
</dbReference>
<dbReference type="GO" id="GO:0007267">
    <property type="term" value="P:cell-cell signaling"/>
    <property type="evidence" value="ECO:0000314"/>
    <property type="project" value="BHF-UCL"/>
</dbReference>
<dbReference type="GO" id="GO:0045446">
    <property type="term" value="P:endothelial cell differentiation"/>
    <property type="evidence" value="ECO:0007669"/>
    <property type="project" value="Ensembl"/>
</dbReference>
<dbReference type="GO" id="GO:0060022">
    <property type="term" value="P:hard palate development"/>
    <property type="evidence" value="ECO:0007669"/>
    <property type="project" value="Ensembl"/>
</dbReference>
<dbReference type="GO" id="GO:0003149">
    <property type="term" value="P:membranous septum morphogenesis"/>
    <property type="evidence" value="ECO:0007669"/>
    <property type="project" value="Ensembl"/>
</dbReference>
<dbReference type="GO" id="GO:1904948">
    <property type="term" value="P:midbrain dopaminergic neuron differentiation"/>
    <property type="evidence" value="ECO:0000303"/>
    <property type="project" value="ParkinsonsUK-UCL"/>
</dbReference>
<dbReference type="GO" id="GO:0003150">
    <property type="term" value="P:muscular septum morphogenesis"/>
    <property type="evidence" value="ECO:0007669"/>
    <property type="project" value="Ensembl"/>
</dbReference>
<dbReference type="GO" id="GO:0030514">
    <property type="term" value="P:negative regulation of BMP signaling pathway"/>
    <property type="evidence" value="ECO:0007669"/>
    <property type="project" value="Ensembl"/>
</dbReference>
<dbReference type="GO" id="GO:0090090">
    <property type="term" value="P:negative regulation of canonical Wnt signaling pathway"/>
    <property type="evidence" value="ECO:0007669"/>
    <property type="project" value="Ensembl"/>
</dbReference>
<dbReference type="GO" id="GO:0045892">
    <property type="term" value="P:negative regulation of DNA-templated transcription"/>
    <property type="evidence" value="ECO:0007669"/>
    <property type="project" value="Ensembl"/>
</dbReference>
<dbReference type="GO" id="GO:1903377">
    <property type="term" value="P:negative regulation of oxidative stress-induced neuron intrinsic apoptotic signaling pathway"/>
    <property type="evidence" value="ECO:0007669"/>
    <property type="project" value="Ensembl"/>
</dbReference>
<dbReference type="GO" id="GO:0030182">
    <property type="term" value="P:neuron differentiation"/>
    <property type="evidence" value="ECO:0000250"/>
    <property type="project" value="UniProtKB"/>
</dbReference>
<dbReference type="GO" id="GO:0035567">
    <property type="term" value="P:non-canonical Wnt signaling pathway"/>
    <property type="evidence" value="ECO:0000318"/>
    <property type="project" value="GO_Central"/>
</dbReference>
<dbReference type="GO" id="GO:0003151">
    <property type="term" value="P:outflow tract morphogenesis"/>
    <property type="evidence" value="ECO:0007669"/>
    <property type="project" value="Ensembl"/>
</dbReference>
<dbReference type="GO" id="GO:0045893">
    <property type="term" value="P:positive regulation of DNA-templated transcription"/>
    <property type="evidence" value="ECO:0000314"/>
    <property type="project" value="BHF-UCL"/>
</dbReference>
<dbReference type="GO" id="GO:0010976">
    <property type="term" value="P:positive regulation of neuron projection development"/>
    <property type="evidence" value="ECO:0000250"/>
    <property type="project" value="ARUK-UCL"/>
</dbReference>
<dbReference type="GO" id="GO:0045669">
    <property type="term" value="P:positive regulation of osteoblast differentiation"/>
    <property type="evidence" value="ECO:0000315"/>
    <property type="project" value="BHF-UCL"/>
</dbReference>
<dbReference type="GO" id="GO:0045944">
    <property type="term" value="P:positive regulation of transcription by RNA polymerase II"/>
    <property type="evidence" value="ECO:0000314"/>
    <property type="project" value="BHF-UCL"/>
</dbReference>
<dbReference type="GO" id="GO:0099054">
    <property type="term" value="P:presynapse assembly"/>
    <property type="evidence" value="ECO:0000304"/>
    <property type="project" value="ParkinsonsUK-UCL"/>
</dbReference>
<dbReference type="GO" id="GO:2000739">
    <property type="term" value="P:regulation of mesenchymal stem cell differentiation"/>
    <property type="evidence" value="ECO:0000315"/>
    <property type="project" value="BHF-UCL"/>
</dbReference>
<dbReference type="GO" id="GO:1905606">
    <property type="term" value="P:regulation of presynapse assembly"/>
    <property type="evidence" value="ECO:0007669"/>
    <property type="project" value="Ensembl"/>
</dbReference>
<dbReference type="GO" id="GO:0009410">
    <property type="term" value="P:response to xenobiotic stimulus"/>
    <property type="evidence" value="ECO:0000315"/>
    <property type="project" value="BHF-UCL"/>
</dbReference>
<dbReference type="CDD" id="cd15247">
    <property type="entry name" value="7tmF_FZD1"/>
    <property type="match status" value="1"/>
</dbReference>
<dbReference type="CDD" id="cd07465">
    <property type="entry name" value="CRD_FZ1"/>
    <property type="match status" value="1"/>
</dbReference>
<dbReference type="FunFam" id="1.10.2000.10:FF:000003">
    <property type="entry name" value="Frizzled class receptor 2"/>
    <property type="match status" value="1"/>
</dbReference>
<dbReference type="FunFam" id="1.20.1070.10:FF:000029">
    <property type="entry name" value="Frizzled class receptor 2"/>
    <property type="match status" value="1"/>
</dbReference>
<dbReference type="Gene3D" id="1.10.2000.10">
    <property type="entry name" value="Frizzled cysteine-rich domain"/>
    <property type="match status" value="1"/>
</dbReference>
<dbReference type="Gene3D" id="1.20.1070.10">
    <property type="entry name" value="Rhodopsin 7-helix transmembrane proteins"/>
    <property type="match status" value="1"/>
</dbReference>
<dbReference type="InterPro" id="IPR015526">
    <property type="entry name" value="Frizzled/SFRP"/>
</dbReference>
<dbReference type="InterPro" id="IPR000539">
    <property type="entry name" value="Frizzled/Smoothened_7TM"/>
</dbReference>
<dbReference type="InterPro" id="IPR020067">
    <property type="entry name" value="Frizzled_dom"/>
</dbReference>
<dbReference type="InterPro" id="IPR036790">
    <property type="entry name" value="Frizzled_dom_sf"/>
</dbReference>
<dbReference type="InterPro" id="IPR017981">
    <property type="entry name" value="GPCR_2-like_7TM"/>
</dbReference>
<dbReference type="PANTHER" id="PTHR11309">
    <property type="entry name" value="FRIZZLED"/>
    <property type="match status" value="1"/>
</dbReference>
<dbReference type="PANTHER" id="PTHR11309:SF81">
    <property type="entry name" value="FRIZZLED-1"/>
    <property type="match status" value="1"/>
</dbReference>
<dbReference type="Pfam" id="PF01534">
    <property type="entry name" value="Frizzled"/>
    <property type="match status" value="1"/>
</dbReference>
<dbReference type="Pfam" id="PF01392">
    <property type="entry name" value="Fz"/>
    <property type="match status" value="1"/>
</dbReference>
<dbReference type="PRINTS" id="PR00489">
    <property type="entry name" value="FRIZZLED"/>
</dbReference>
<dbReference type="SMART" id="SM00063">
    <property type="entry name" value="FRI"/>
    <property type="match status" value="1"/>
</dbReference>
<dbReference type="SMART" id="SM01330">
    <property type="entry name" value="Frizzled"/>
    <property type="match status" value="1"/>
</dbReference>
<dbReference type="SUPFAM" id="SSF63501">
    <property type="entry name" value="Frizzled cysteine-rich domain"/>
    <property type="match status" value="1"/>
</dbReference>
<dbReference type="PROSITE" id="PS50038">
    <property type="entry name" value="FZ"/>
    <property type="match status" value="1"/>
</dbReference>
<dbReference type="PROSITE" id="PS50261">
    <property type="entry name" value="G_PROTEIN_RECEP_F2_4"/>
    <property type="match status" value="1"/>
</dbReference>
<name>FZD1_HUMAN</name>
<gene>
    <name type="primary">FZD1</name>
</gene>
<feature type="signal peptide" evidence="3">
    <location>
        <begin position="1"/>
        <end position="69"/>
    </location>
</feature>
<feature type="chain" id="PRO_0000012973" description="Frizzled-1">
    <location>
        <begin position="70"/>
        <end position="647"/>
    </location>
</feature>
<feature type="topological domain" description="Extracellular" evidence="3">
    <location>
        <begin position="73"/>
        <end position="322"/>
    </location>
</feature>
<feature type="transmembrane region" description="Helical; Name=1" evidence="3">
    <location>
        <begin position="323"/>
        <end position="343"/>
    </location>
</feature>
<feature type="topological domain" description="Cytoplasmic" evidence="3">
    <location>
        <begin position="344"/>
        <end position="354"/>
    </location>
</feature>
<feature type="transmembrane region" description="Helical; Name=2" evidence="3">
    <location>
        <begin position="355"/>
        <end position="375"/>
    </location>
</feature>
<feature type="topological domain" description="Extracellular" evidence="3">
    <location>
        <begin position="376"/>
        <end position="402"/>
    </location>
</feature>
<feature type="transmembrane region" description="Helical; Name=3" evidence="3">
    <location>
        <begin position="403"/>
        <end position="423"/>
    </location>
</feature>
<feature type="topological domain" description="Cytoplasmic" evidence="3">
    <location>
        <begin position="424"/>
        <end position="445"/>
    </location>
</feature>
<feature type="transmembrane region" description="Helical; Name=4" evidence="3">
    <location>
        <begin position="446"/>
        <end position="466"/>
    </location>
</feature>
<feature type="topological domain" description="Extracellular" evidence="3">
    <location>
        <begin position="467"/>
        <end position="489"/>
    </location>
</feature>
<feature type="transmembrane region" description="Helical; Name=5" evidence="3">
    <location>
        <begin position="490"/>
        <end position="510"/>
    </location>
</feature>
<feature type="topological domain" description="Cytoplasmic" evidence="3">
    <location>
        <begin position="511"/>
        <end position="536"/>
    </location>
</feature>
<feature type="transmembrane region" description="Helical; Name=6" evidence="3">
    <location>
        <begin position="537"/>
        <end position="557"/>
    </location>
</feature>
<feature type="topological domain" description="Extracellular" evidence="3">
    <location>
        <begin position="558"/>
        <end position="601"/>
    </location>
</feature>
<feature type="transmembrane region" description="Helical; Name=7" evidence="3">
    <location>
        <begin position="602"/>
        <end position="622"/>
    </location>
</feature>
<feature type="topological domain" description="Cytoplasmic" evidence="3">
    <location>
        <begin position="623"/>
        <end position="647"/>
    </location>
</feature>
<feature type="domain" description="FZ" evidence="4">
    <location>
        <begin position="111"/>
        <end position="230"/>
    </location>
</feature>
<feature type="region of interest" description="Disordered" evidence="5">
    <location>
        <begin position="74"/>
        <end position="104"/>
    </location>
</feature>
<feature type="short sequence motif" description="Lys-Thr-X-X-X-Trp motif, mediates interaction with the PDZ domain of Dvl family members" evidence="1">
    <location>
        <begin position="625"/>
        <end position="630"/>
    </location>
</feature>
<feature type="short sequence motif" description="PDZ-binding">
    <location>
        <begin position="645"/>
        <end position="647"/>
    </location>
</feature>
<feature type="glycosylation site" description="N-linked (GlcNAc...) asparagine" evidence="3">
    <location>
        <position position="130"/>
    </location>
</feature>
<feature type="glycosylation site" description="N-linked (GlcNAc...) asparagine" evidence="3">
    <location>
        <position position="231"/>
    </location>
</feature>
<feature type="disulfide bond" evidence="4">
    <location>
        <begin position="116"/>
        <end position="177"/>
    </location>
</feature>
<feature type="disulfide bond" evidence="4">
    <location>
        <begin position="124"/>
        <end position="170"/>
    </location>
</feature>
<feature type="disulfide bond" evidence="4">
    <location>
        <begin position="161"/>
        <end position="198"/>
    </location>
</feature>
<feature type="disulfide bond" evidence="4">
    <location>
        <begin position="187"/>
        <end position="227"/>
    </location>
</feature>
<feature type="disulfide bond" evidence="4">
    <location>
        <begin position="191"/>
        <end position="215"/>
    </location>
</feature>
<feature type="sequence variant" id="VAR_049290" description="In dbSNP:rs3750146.">
    <original>V</original>
    <variation>M</variation>
    <location>
        <position position="343"/>
    </location>
</feature>
<feature type="sequence conflict" description="In Ref. 1; AAD41636." evidence="10" ref="1">
    <original>P</original>
    <variation>PP</variation>
    <location>
        <position position="93"/>
    </location>
</feature>
<feature type="helix" evidence="11">
    <location>
        <begin position="278"/>
        <end position="280"/>
    </location>
</feature>
<feature type="strand" evidence="12">
    <location>
        <begin position="293"/>
        <end position="295"/>
    </location>
</feature>
<feature type="turn" evidence="12">
    <location>
        <begin position="303"/>
        <end position="308"/>
    </location>
</feature>
<feature type="strand" evidence="12">
    <location>
        <begin position="309"/>
        <end position="311"/>
    </location>
</feature>
<feature type="helix" evidence="12">
    <location>
        <begin position="313"/>
        <end position="343"/>
    </location>
</feature>
<feature type="strand" evidence="11">
    <location>
        <begin position="345"/>
        <end position="347"/>
    </location>
</feature>
<feature type="strand" evidence="11">
    <location>
        <begin position="350"/>
        <end position="352"/>
    </location>
</feature>
<feature type="helix" evidence="12">
    <location>
        <begin position="354"/>
        <end position="370"/>
    </location>
</feature>
<feature type="turn" evidence="12">
    <location>
        <begin position="371"/>
        <end position="380"/>
    </location>
</feature>
<feature type="strand" evidence="12">
    <location>
        <begin position="385"/>
        <end position="388"/>
    </location>
</feature>
<feature type="strand" evidence="11">
    <location>
        <begin position="395"/>
        <end position="397"/>
    </location>
</feature>
<feature type="helix" evidence="12">
    <location>
        <begin position="400"/>
        <end position="430"/>
    </location>
</feature>
<feature type="strand" evidence="12">
    <location>
        <begin position="431"/>
        <end position="433"/>
    </location>
</feature>
<feature type="helix" evidence="12">
    <location>
        <begin position="437"/>
        <end position="440"/>
    </location>
</feature>
<feature type="helix" evidence="12">
    <location>
        <begin position="441"/>
        <end position="443"/>
    </location>
</feature>
<feature type="helix" evidence="12">
    <location>
        <begin position="444"/>
        <end position="449"/>
    </location>
</feature>
<feature type="helix" evidence="12">
    <location>
        <begin position="454"/>
        <end position="461"/>
    </location>
</feature>
<feature type="turn" evidence="12">
    <location>
        <begin position="462"/>
        <end position="466"/>
    </location>
</feature>
<feature type="strand" evidence="11">
    <location>
        <begin position="468"/>
        <end position="470"/>
    </location>
</feature>
<feature type="strand" evidence="12">
    <location>
        <begin position="472"/>
        <end position="482"/>
    </location>
</feature>
<feature type="turn" evidence="12">
    <location>
        <begin position="485"/>
        <end position="491"/>
    </location>
</feature>
<feature type="helix" evidence="12">
    <location>
        <begin position="492"/>
        <end position="513"/>
    </location>
</feature>
<feature type="turn" evidence="12">
    <location>
        <begin position="529"/>
        <end position="531"/>
    </location>
</feature>
<feature type="helix" evidence="12">
    <location>
        <begin position="532"/>
        <end position="555"/>
    </location>
</feature>
<feature type="turn" evidence="12">
    <location>
        <begin position="559"/>
        <end position="561"/>
    </location>
</feature>
<feature type="helix" evidence="12">
    <location>
        <begin position="562"/>
        <end position="573"/>
    </location>
</feature>
<feature type="strand" evidence="11">
    <location>
        <begin position="575"/>
        <end position="577"/>
    </location>
</feature>
<feature type="helix" evidence="12">
    <location>
        <begin position="600"/>
        <end position="608"/>
    </location>
</feature>
<feature type="turn" evidence="12">
    <location>
        <begin position="609"/>
        <end position="611"/>
    </location>
</feature>
<feature type="helix" evidence="12">
    <location>
        <begin position="612"/>
        <end position="621"/>
    </location>
</feature>
<feature type="helix" evidence="12">
    <location>
        <begin position="624"/>
        <end position="635"/>
    </location>
</feature>
<comment type="function">
    <text evidence="2 6 10">Receptor for Wnt proteins (PubMed:10557084). Activated by WNT3A, WNT3, WNT1 and to a lesser extent WNT2, but apparently not by WNT4, WNT5A, WNT5B, WNT6, WNT7A or WNT7B (PubMed:10557084). Contradictory results showing activation by WNT7B have been described for mouse (By similarity). Functions in the canonical Wnt/beta-catenin signaling pathway (PubMed:10557084). The canonical Wnt/beta-catenin signaling pathway leads to the activation of disheveled proteins, inhibition of GSK-3 kinase, nuclear accumulation of beta-catenin and activation of Wnt target genes (PubMed:10557084). A second signaling pathway involving PKC and calcium fluxes has been seen for some family members, but it is not yet clear if it represents a distinct pathway or if it can be integrated in the canonical pathway, as PKC seems to be required for Wnt-mediated inactivation of GSK-3 kinase. Both pathways seem to involve interactions with G-proteins. May be involved in transduction and intercellular transmission of polarity information during tissue morphogenesis and/or in differentiated tissues (Probable).</text>
</comment>
<comment type="function">
    <text evidence="8">(Microbial infection) Acts as a receptor for C.difficile toxin TcdB in the colonic epithelium.</text>
</comment>
<comment type="subunit">
    <text evidence="2 7">Interacts with MYOC (PubMed:19188438). Interacts with WNT7B (By similarity).</text>
</comment>
<comment type="subunit">
    <text evidence="8">(Microbial infection) Interacts with C.difficile toxin TcdB; frizzled receptors constitute the major host receptors for TcdB in the colonic epithelium.</text>
</comment>
<comment type="subcellular location">
    <subcellularLocation>
        <location evidence="6">Cell membrane</location>
        <topology evidence="3">Multi-pass membrane protein</topology>
    </subcellularLocation>
</comment>
<comment type="tissue specificity">
    <text evidence="9">Expressed in adult heart, placenta, lung, kidney, pancreas, prostate, and ovary and in fetal lung and kidney.</text>
</comment>
<comment type="domain">
    <text evidence="1">Lys-Thr-X-X-X-Trp motif interacts with the PDZ domain of Dvl (Disheveled) family members and is involved in the activation of the Wnt/beta-catenin signaling pathway.</text>
</comment>
<comment type="domain">
    <text evidence="1">The FZ domain is involved in binding with Wnt ligands.</text>
</comment>
<comment type="PTM">
    <text evidence="1">Ubiquitinated by ZNRF3, leading to its degradation by the proteasome.</text>
</comment>
<comment type="similarity">
    <text evidence="10">Belongs to the G-protein coupled receptor Fz/Smo family.</text>
</comment>
<comment type="caution">
    <text evidence="10">Activation by specific Wnt family members may depend on the cells used for the experiment. Contradictory results have been reported for activation by WNT7B in human and mouse.</text>
</comment>
<sequence length="647" mass="71158">MAEEEAPKKSRAAGGGASWELCAGALSARLAEEGSGDAGGRRRPPVDPRRLARQLLLLLWLLEAPLLLGVRAQAAGQGPGQGPGPGQQPPPPPQQQQSGQQYNGERGISVPDHGYCQPISIPLCTDIAYNQTIMPNLLGHTNQEDAGLEVHQFYPLVKVQCSAELKFFLCSMYAPVCTVLEQALPPCRSLCERARQGCEALMNKFGFQWPDTLKCEKFPVHGAGELCVGQNTSDKGTPTPSLLPEFWTSNPQHGGGGHRGGFPGGAGASERGKFSCPRALKVPSYLNYHFLGEKDCGAPCEPTKVYGLMYFGPEELRFSRTWIGIWSVLCCASTLFTVLTYLVDMRRFSYPERPIIFLSGCYTAVAVAYIAGFLLEDRVVCNDKFAEDGARTVAQGTKKEGCTILFMMLYFFSMASSIWWVILSLTWFLAAGMKWGHEAIEANSQYFHLAAWAVPAIKTITILALGQVDGDVLSGVCFVGLNNVDALRGFVLAPLFVYLFIGTSFLLAGFVSLFRIRTIMKHDGTKTEKLEKLMVRIGVFSVLYTVPATIVIACYFYEQAFRDQWERSWVAQSCKSYAIPCPHLQAGGGAPPHPPMSPDFTVFMIKYLMTLIVGITSGFWIWSGKTLNSWRKFYTRLTNSKQGETTV</sequence>
<evidence type="ECO:0000250" key="1"/>
<evidence type="ECO:0000250" key="2">
    <source>
        <dbReference type="UniProtKB" id="O70421"/>
    </source>
</evidence>
<evidence type="ECO:0000255" key="3"/>
<evidence type="ECO:0000255" key="4">
    <source>
        <dbReference type="PROSITE-ProRule" id="PRU00090"/>
    </source>
</evidence>
<evidence type="ECO:0000256" key="5">
    <source>
        <dbReference type="SAM" id="MobiDB-lite"/>
    </source>
</evidence>
<evidence type="ECO:0000269" key="6">
    <source>
    </source>
</evidence>
<evidence type="ECO:0000269" key="7">
    <source>
    </source>
</evidence>
<evidence type="ECO:0000269" key="8">
    <source>
    </source>
</evidence>
<evidence type="ECO:0000269" key="9">
    <source>
    </source>
</evidence>
<evidence type="ECO:0000305" key="10"/>
<evidence type="ECO:0007829" key="11">
    <source>
        <dbReference type="PDB" id="8J9N"/>
    </source>
</evidence>
<evidence type="ECO:0007829" key="12">
    <source>
        <dbReference type="PDB" id="8J9O"/>
    </source>
</evidence>